<gene>
    <name evidence="1" type="primary">phnW</name>
    <name type="ordered locus">H16_B1953</name>
</gene>
<feature type="chain" id="PRO_0000286780" description="2-aminoethylphosphonate--pyruvate transaminase">
    <location>
        <begin position="1"/>
        <end position="377"/>
    </location>
</feature>
<feature type="modified residue" description="N6-(pyridoxal phosphate)lysine" evidence="1">
    <location>
        <position position="194"/>
    </location>
</feature>
<proteinExistence type="inferred from homology"/>
<protein>
    <recommendedName>
        <fullName evidence="1">2-aminoethylphosphonate--pyruvate transaminase</fullName>
        <ecNumber evidence="1">2.6.1.37</ecNumber>
    </recommendedName>
    <alternativeName>
        <fullName evidence="1">2-aminoethylphosphonate aminotransferase</fullName>
    </alternativeName>
    <alternativeName>
        <fullName evidence="1">AEP transaminase</fullName>
        <shortName evidence="1">AEPT</shortName>
    </alternativeName>
</protein>
<evidence type="ECO:0000255" key="1">
    <source>
        <dbReference type="HAMAP-Rule" id="MF_01376"/>
    </source>
</evidence>
<evidence type="ECO:0000305" key="2"/>
<name>PHNW_CUPNH</name>
<sequence>MIRGNDPILLTPGPLTTSLATKQAMLRDWGSWDAAFNAITRSLCDDLVRIVHGEGTHVCVPMQGSGTFSVEAAIANVVPRDGKVLVPQNGAYCQRILKICKVLGRASVELPIPEDQPATAALIEEAIRRDPSITHVAQVHCETGAGVLNPLQEIAALCQRLGKGLIVDAMSSFGAIEIDARTMPFDALVAATGKCIEGVPGMGFVLVKKDVLEASQGNSHSLALDLYDQYVYMQKTTQWRFTPPTHVVAAFRTALDQFLEEGGQPVRGARYRRNCDALVQGMAALGFRAFLPAAVQAPIIVTFHAPADARYDFKTFYARVRERGYILYPGKLTQMETFRVGCIGAIDDNEMRNVVTAIGEVLREMGIKMQAPLAEAA</sequence>
<keyword id="KW-0032">Aminotransferase</keyword>
<keyword id="KW-0663">Pyridoxal phosphate</keyword>
<keyword id="KW-0670">Pyruvate</keyword>
<keyword id="KW-1185">Reference proteome</keyword>
<keyword id="KW-0808">Transferase</keyword>
<dbReference type="EC" id="2.6.1.37" evidence="1"/>
<dbReference type="EMBL" id="AM260480">
    <property type="protein sequence ID" value="CAJ96735.1"/>
    <property type="molecule type" value="Genomic_DNA"/>
</dbReference>
<dbReference type="RefSeq" id="WP_011617556.1">
    <property type="nucleotide sequence ID" value="NC_008314.1"/>
</dbReference>
<dbReference type="SMR" id="Q0JZT9"/>
<dbReference type="STRING" id="381666.H16_B1953"/>
<dbReference type="KEGG" id="reh:H16_B1953"/>
<dbReference type="eggNOG" id="COG0075">
    <property type="taxonomic scope" value="Bacteria"/>
</dbReference>
<dbReference type="HOGENOM" id="CLU_027686_3_1_4"/>
<dbReference type="OrthoDB" id="9766472at2"/>
<dbReference type="Proteomes" id="UP000008210">
    <property type="component" value="Chromosome 2"/>
</dbReference>
<dbReference type="GO" id="GO:0047304">
    <property type="term" value="F:2-aminoethylphosphonate-pyruvate transaminase activity"/>
    <property type="evidence" value="ECO:0007669"/>
    <property type="project" value="UniProtKB-UniRule"/>
</dbReference>
<dbReference type="GO" id="GO:0019700">
    <property type="term" value="P:organic phosphonate catabolic process"/>
    <property type="evidence" value="ECO:0007669"/>
    <property type="project" value="InterPro"/>
</dbReference>
<dbReference type="Gene3D" id="3.90.1150.10">
    <property type="entry name" value="Aspartate Aminotransferase, domain 1"/>
    <property type="match status" value="1"/>
</dbReference>
<dbReference type="Gene3D" id="3.40.640.10">
    <property type="entry name" value="Type I PLP-dependent aspartate aminotransferase-like (Major domain)"/>
    <property type="match status" value="1"/>
</dbReference>
<dbReference type="HAMAP" id="MF_01376">
    <property type="entry name" value="PhnW_aminotrans_5"/>
    <property type="match status" value="1"/>
</dbReference>
<dbReference type="InterPro" id="IPR000192">
    <property type="entry name" value="Aminotrans_V_dom"/>
</dbReference>
<dbReference type="InterPro" id="IPR012703">
    <property type="entry name" value="NH2EtPonate_pyrv_transaminase"/>
</dbReference>
<dbReference type="InterPro" id="IPR015424">
    <property type="entry name" value="PyrdxlP-dep_Trfase"/>
</dbReference>
<dbReference type="InterPro" id="IPR015421">
    <property type="entry name" value="PyrdxlP-dep_Trfase_major"/>
</dbReference>
<dbReference type="InterPro" id="IPR015422">
    <property type="entry name" value="PyrdxlP-dep_Trfase_small"/>
</dbReference>
<dbReference type="InterPro" id="IPR024169">
    <property type="entry name" value="SP_NH2Trfase/AEP_transaminase"/>
</dbReference>
<dbReference type="NCBIfam" id="TIGR03301">
    <property type="entry name" value="PhnW-AepZ"/>
    <property type="match status" value="1"/>
</dbReference>
<dbReference type="NCBIfam" id="NF010006">
    <property type="entry name" value="PRK13479.1"/>
    <property type="match status" value="1"/>
</dbReference>
<dbReference type="NCBIfam" id="TIGR02326">
    <property type="entry name" value="transamin_PhnW"/>
    <property type="match status" value="1"/>
</dbReference>
<dbReference type="PANTHER" id="PTHR42778">
    <property type="entry name" value="2-AMINOETHYLPHOSPHONATE--PYRUVATE TRANSAMINASE"/>
    <property type="match status" value="1"/>
</dbReference>
<dbReference type="PANTHER" id="PTHR42778:SF1">
    <property type="entry name" value="2-AMINOETHYLPHOSPHONATE--PYRUVATE TRANSAMINASE"/>
    <property type="match status" value="1"/>
</dbReference>
<dbReference type="Pfam" id="PF00266">
    <property type="entry name" value="Aminotran_5"/>
    <property type="match status" value="1"/>
</dbReference>
<dbReference type="PIRSF" id="PIRSF000524">
    <property type="entry name" value="SPT"/>
    <property type="match status" value="1"/>
</dbReference>
<dbReference type="SUPFAM" id="SSF53383">
    <property type="entry name" value="PLP-dependent transferases"/>
    <property type="match status" value="1"/>
</dbReference>
<reference key="1">
    <citation type="journal article" date="2006" name="Nat. Biotechnol.">
        <title>Genome sequence of the bioplastic-producing 'Knallgas' bacterium Ralstonia eutropha H16.</title>
        <authorList>
            <person name="Pohlmann A."/>
            <person name="Fricke W.F."/>
            <person name="Reinecke F."/>
            <person name="Kusian B."/>
            <person name="Liesegang H."/>
            <person name="Cramm R."/>
            <person name="Eitinger T."/>
            <person name="Ewering C."/>
            <person name="Poetter M."/>
            <person name="Schwartz E."/>
            <person name="Strittmatter A."/>
            <person name="Voss I."/>
            <person name="Gottschalk G."/>
            <person name="Steinbuechel A."/>
            <person name="Friedrich B."/>
            <person name="Bowien B."/>
        </authorList>
    </citation>
    <scope>NUCLEOTIDE SEQUENCE [LARGE SCALE GENOMIC DNA]</scope>
    <source>
        <strain>ATCC 17699 / DSM 428 / KCTC 22496 / NCIMB 10442 / H16 / Stanier 337</strain>
    </source>
</reference>
<comment type="function">
    <text evidence="1">Involved in phosphonate degradation.</text>
</comment>
<comment type="catalytic activity">
    <reaction evidence="1">
        <text>(2-aminoethyl)phosphonate + pyruvate = phosphonoacetaldehyde + L-alanine</text>
        <dbReference type="Rhea" id="RHEA:17021"/>
        <dbReference type="ChEBI" id="CHEBI:15361"/>
        <dbReference type="ChEBI" id="CHEBI:57418"/>
        <dbReference type="ChEBI" id="CHEBI:57972"/>
        <dbReference type="ChEBI" id="CHEBI:58383"/>
        <dbReference type="EC" id="2.6.1.37"/>
    </reaction>
</comment>
<comment type="cofactor">
    <cofactor evidence="1">
        <name>pyridoxal 5'-phosphate</name>
        <dbReference type="ChEBI" id="CHEBI:597326"/>
    </cofactor>
</comment>
<comment type="subunit">
    <text evidence="1">Homodimer.</text>
</comment>
<comment type="similarity">
    <text evidence="1">Belongs to the class-V pyridoxal-phosphate-dependent aminotransferase family. PhnW subfamily.</text>
</comment>
<comment type="caution">
    <text evidence="2">The second enzyme involved in phosphonate degradation (PhnX, EC 3.11.1.1) is not found in this organism. The function of this enzyme is therefore uncertain.</text>
</comment>
<organism>
    <name type="scientific">Cupriavidus necator (strain ATCC 17699 / DSM 428 / KCTC 22496 / NCIMB 10442 / H16 / Stanier 337)</name>
    <name type="common">Ralstonia eutropha</name>
    <dbReference type="NCBI Taxonomy" id="381666"/>
    <lineage>
        <taxon>Bacteria</taxon>
        <taxon>Pseudomonadati</taxon>
        <taxon>Pseudomonadota</taxon>
        <taxon>Betaproteobacteria</taxon>
        <taxon>Burkholderiales</taxon>
        <taxon>Burkholderiaceae</taxon>
        <taxon>Cupriavidus</taxon>
    </lineage>
</organism>
<accession>Q0JZT9</accession>